<keyword id="KW-0456">Lyase</keyword>
<keyword id="KW-0663">Pyridoxal phosphate</keyword>
<keyword id="KW-1185">Reference proteome</keyword>
<comment type="function">
    <text evidence="1 4">Probably catalyzes the conversion of hercynylcysteine sulfoxide to ergothioneine (By similarity). ERG is one of the major redox buffers which protects bacteria against redox stressors and antibiotics; loss of ERG or mycothiol (MSH, the other major redox buffer in this bacteria) leads to respiratory alterations and bioenergetic deficiencies that negatively impact virulence (PubMed:26774486).</text>
</comment>
<comment type="catalytic activity">
    <reaction evidence="1">
        <text>S-(hercyn-2-yl)-L-cysteine S-oxide + AH2 + H(+) = ergothioneine + pyruvate + A + NH4(+)</text>
        <dbReference type="Rhea" id="RHEA:42688"/>
        <dbReference type="ChEBI" id="CHEBI:13193"/>
        <dbReference type="ChEBI" id="CHEBI:15361"/>
        <dbReference type="ChEBI" id="CHEBI:15378"/>
        <dbReference type="ChEBI" id="CHEBI:17499"/>
        <dbReference type="ChEBI" id="CHEBI:28938"/>
        <dbReference type="ChEBI" id="CHEBI:82706"/>
        <dbReference type="ChEBI" id="CHEBI:134344"/>
    </reaction>
</comment>
<comment type="cofactor">
    <cofactor evidence="1">
        <name>pyridoxal 5'-phosphate</name>
        <dbReference type="ChEBI" id="CHEBI:597326"/>
    </cofactor>
</comment>
<comment type="pathway">
    <text evidence="1 4">Amino-acid biosynthesis; ergothioneine biosynthesis.</text>
</comment>
<comment type="induction">
    <text evidence="3">Not part of the egtA-egtB-egtC-egtD operon (PubMed:26774486).</text>
</comment>
<comment type="similarity">
    <text evidence="1">Belongs to the class-V pyridoxal-phosphate-dependent aminotransferase family. EgtE subfamily.</text>
</comment>
<sequence length="395" mass="41021">MQDEAMRRSGANSPAGDSLADRWRAARPPVAGLHLDSAACSRQSFAALDAAAQHARHEAEVGGYVAAEAAAAVLDAGRAAVAALSGLPDAEVVFTTGSLHALDLLLGSWPGENRTLACLPGEYGPNLAVMAAHGFDVRPLPTLQDGRVALDDAAFMLADDPPDLVHLTVVASHRGVAQPLAMVAQLCTELKLPLVVDAAQGLGHVDCAVGADVTYASSRKWIAGPRGVGVLAVRPELMERLRARLPAPDWMPPLTVAQQLGFGEANVAARVGFSVALGEHLACGPQAIRARLAELGDIARTVLADVSGWRVVEAVDEPSAITTLAPIDGADPAAVRAWLLSQRRIVTTYAGVERAPLELPAPVLRISPHVDNTADDLDAFAEALVAATAATSGER</sequence>
<name>EGTE_MYCTO</name>
<dbReference type="EC" id="4.4.-.-" evidence="1"/>
<dbReference type="EMBL" id="AE000516">
    <property type="protein sequence ID" value="AAK48170.1"/>
    <property type="molecule type" value="Genomic_DNA"/>
</dbReference>
<dbReference type="SMR" id="Q7D515"/>
<dbReference type="KEGG" id="mtc:MT3803"/>
<dbReference type="HOGENOM" id="CLU_003433_2_1_11"/>
<dbReference type="UniPathway" id="UPA01014"/>
<dbReference type="Proteomes" id="UP000001020">
    <property type="component" value="Chromosome"/>
</dbReference>
<dbReference type="GO" id="GO:1990411">
    <property type="term" value="F:hercynylcysteine sulfoxide lyase activity (ergothioneine-forming)"/>
    <property type="evidence" value="ECO:0007669"/>
    <property type="project" value="RHEA"/>
</dbReference>
<dbReference type="FunFam" id="3.40.640.10:FF:000174">
    <property type="entry name" value="Probable hercynylcysteine sulfoxide lyase"/>
    <property type="match status" value="1"/>
</dbReference>
<dbReference type="FunFam" id="3.90.1150.10:FF:000157">
    <property type="entry name" value="Probable hercynylcysteine sulfoxide lyase"/>
    <property type="match status" value="1"/>
</dbReference>
<dbReference type="Gene3D" id="3.90.1150.10">
    <property type="entry name" value="Aspartate Aminotransferase, domain 1"/>
    <property type="match status" value="1"/>
</dbReference>
<dbReference type="Gene3D" id="3.40.640.10">
    <property type="entry name" value="Type I PLP-dependent aspartate aminotransferase-like (Major domain)"/>
    <property type="match status" value="1"/>
</dbReference>
<dbReference type="HAMAP" id="MF_02038">
    <property type="entry name" value="EgtE"/>
    <property type="match status" value="1"/>
</dbReference>
<dbReference type="InterPro" id="IPR000192">
    <property type="entry name" value="Aminotrans_V_dom"/>
</dbReference>
<dbReference type="InterPro" id="IPR027563">
    <property type="entry name" value="EgtE"/>
</dbReference>
<dbReference type="InterPro" id="IPR015424">
    <property type="entry name" value="PyrdxlP-dep_Trfase"/>
</dbReference>
<dbReference type="InterPro" id="IPR015421">
    <property type="entry name" value="PyrdxlP-dep_Trfase_major"/>
</dbReference>
<dbReference type="InterPro" id="IPR015422">
    <property type="entry name" value="PyrdxlP-dep_Trfase_small"/>
</dbReference>
<dbReference type="NCBIfam" id="TIGR04343">
    <property type="entry name" value="egtE_PLP_lyase"/>
    <property type="match status" value="1"/>
</dbReference>
<dbReference type="PANTHER" id="PTHR43586">
    <property type="entry name" value="CYSTEINE DESULFURASE"/>
    <property type="match status" value="1"/>
</dbReference>
<dbReference type="PANTHER" id="PTHR43586:SF8">
    <property type="entry name" value="CYSTEINE DESULFURASE 1, CHLOROPLASTIC"/>
    <property type="match status" value="1"/>
</dbReference>
<dbReference type="Pfam" id="PF00266">
    <property type="entry name" value="Aminotran_5"/>
    <property type="match status" value="1"/>
</dbReference>
<dbReference type="SUPFAM" id="SSF53383">
    <property type="entry name" value="PLP-dependent transferases"/>
    <property type="match status" value="1"/>
</dbReference>
<accession>Q7D515</accession>
<feature type="chain" id="PRO_0000439069" description="Probable hercynylcysteine sulfoxide lyase">
    <location>
        <begin position="1"/>
        <end position="395"/>
    </location>
</feature>
<feature type="region of interest" description="Disordered" evidence="2">
    <location>
        <begin position="1"/>
        <end position="21"/>
    </location>
</feature>
<feature type="modified residue" description="N6-(pyridoxal phosphate)lysine" evidence="1">
    <location>
        <position position="220"/>
    </location>
</feature>
<protein>
    <recommendedName>
        <fullName evidence="1">Probable hercynylcysteine sulfoxide lyase</fullName>
        <ecNumber evidence="1">4.4.-.-</ecNumber>
    </recommendedName>
</protein>
<proteinExistence type="evidence at transcript level"/>
<gene>
    <name evidence="1" type="primary">egtE</name>
    <name type="ordered locus">MT3803</name>
</gene>
<organism>
    <name type="scientific">Mycobacterium tuberculosis (strain CDC 1551 / Oshkosh)</name>
    <dbReference type="NCBI Taxonomy" id="83331"/>
    <lineage>
        <taxon>Bacteria</taxon>
        <taxon>Bacillati</taxon>
        <taxon>Actinomycetota</taxon>
        <taxon>Actinomycetes</taxon>
        <taxon>Mycobacteriales</taxon>
        <taxon>Mycobacteriaceae</taxon>
        <taxon>Mycobacterium</taxon>
        <taxon>Mycobacterium tuberculosis complex</taxon>
    </lineage>
</organism>
<reference key="1">
    <citation type="journal article" date="2002" name="J. Bacteriol.">
        <title>Whole-genome comparison of Mycobacterium tuberculosis clinical and laboratory strains.</title>
        <authorList>
            <person name="Fleischmann R.D."/>
            <person name="Alland D."/>
            <person name="Eisen J.A."/>
            <person name="Carpenter L."/>
            <person name="White O."/>
            <person name="Peterson J.D."/>
            <person name="DeBoy R.T."/>
            <person name="Dodson R.J."/>
            <person name="Gwinn M.L."/>
            <person name="Haft D.H."/>
            <person name="Hickey E.K."/>
            <person name="Kolonay J.F."/>
            <person name="Nelson W.C."/>
            <person name="Umayam L.A."/>
            <person name="Ermolaeva M.D."/>
            <person name="Salzberg S.L."/>
            <person name="Delcher A."/>
            <person name="Utterback T.R."/>
            <person name="Weidman J.F."/>
            <person name="Khouri H.M."/>
            <person name="Gill J."/>
            <person name="Mikula A."/>
            <person name="Bishai W."/>
            <person name="Jacobs W.R. Jr."/>
            <person name="Venter J.C."/>
            <person name="Fraser C.M."/>
        </authorList>
    </citation>
    <scope>NUCLEOTIDE SEQUENCE [LARGE SCALE GENOMIC DNA]</scope>
    <source>
        <strain>CDC 1551 / Oshkosh</strain>
    </source>
</reference>
<reference key="2">
    <citation type="journal article" date="2016" name="Cell Rep.">
        <title>Ergothioneine maintains redox and bioenergetic homeostasis essential for drug susceptibility and virulence of Mycobacterium tuberculosis.</title>
        <authorList>
            <person name="Saini V."/>
            <person name="Cumming B.M."/>
            <person name="Guidry L."/>
            <person name="Lamprecht D.A."/>
            <person name="Adamson J.H."/>
            <person name="Reddy V.P."/>
            <person name="Chinta K.C."/>
            <person name="Mazorodze J.H."/>
            <person name="Glasgow J.N."/>
            <person name="Richard-Greenblatt M."/>
            <person name="Gomez-Velasco A."/>
            <person name="Bach H."/>
            <person name="Av-Gay Y."/>
            <person name="Eoh H."/>
            <person name="Rhee K."/>
            <person name="Steyn A.J."/>
        </authorList>
    </citation>
    <scope>FUNCTION</scope>
    <scope>PATHWAY</scope>
    <scope>OPERON STRUCTURE</scope>
    <source>
        <strain>CDC 1551 / Oshkosh</strain>
    </source>
</reference>
<evidence type="ECO:0000255" key="1">
    <source>
        <dbReference type="HAMAP-Rule" id="MF_02038"/>
    </source>
</evidence>
<evidence type="ECO:0000256" key="2">
    <source>
        <dbReference type="SAM" id="MobiDB-lite"/>
    </source>
</evidence>
<evidence type="ECO:0000269" key="3">
    <source>
    </source>
</evidence>
<evidence type="ECO:0000305" key="4">
    <source>
    </source>
</evidence>